<dbReference type="EMBL" id="AK135352">
    <property type="protein sequence ID" value="BAE22498.1"/>
    <property type="molecule type" value="mRNA"/>
</dbReference>
<dbReference type="EMBL" id="AK153246">
    <property type="protein sequence ID" value="BAE31837.1"/>
    <property type="molecule type" value="mRNA"/>
</dbReference>
<dbReference type="EMBL" id="AL591146">
    <property type="status" value="NOT_ANNOTATED_CDS"/>
    <property type="molecule type" value="Genomic_DNA"/>
</dbReference>
<dbReference type="EMBL" id="BC055024">
    <property type="protein sequence ID" value="AAH55024.1"/>
    <property type="molecule type" value="mRNA"/>
</dbReference>
<dbReference type="CCDS" id="CCDS25132.1"/>
<dbReference type="RefSeq" id="NP_081748.1">
    <property type="nucleotide sequence ID" value="NM_027472.3"/>
</dbReference>
<dbReference type="SMR" id="Q9CYI0"/>
<dbReference type="BioGRID" id="214150">
    <property type="interactions" value="1"/>
</dbReference>
<dbReference type="FunCoup" id="Q9CYI0">
    <property type="interactions" value="1769"/>
</dbReference>
<dbReference type="STRING" id="10090.ENSMUSP00000099515"/>
<dbReference type="iPTMnet" id="Q9CYI0"/>
<dbReference type="PhosphoSitePlus" id="Q9CYI0"/>
<dbReference type="SwissPalm" id="Q9CYI0"/>
<dbReference type="PaxDb" id="10090-ENSMUSP00000099515"/>
<dbReference type="Pumba" id="Q9CYI0"/>
<dbReference type="Antibodypedia" id="1366">
    <property type="antibodies" value="184 antibodies from 21 providers"/>
</dbReference>
<dbReference type="DNASU" id="70591"/>
<dbReference type="Ensembl" id="ENSMUST00000103225.11">
    <property type="protein sequence ID" value="ENSMUSP00000099515.5"/>
    <property type="gene ID" value="ENSMUSG00000057181.17"/>
</dbReference>
<dbReference type="GeneID" id="70591"/>
<dbReference type="KEGG" id="mmu:70591"/>
<dbReference type="UCSC" id="uc007klv.2">
    <property type="organism name" value="mouse"/>
</dbReference>
<dbReference type="AGR" id="MGI:1917841"/>
<dbReference type="MGI" id="MGI:1917841">
    <property type="gene designation" value="5730455P16Rik"/>
</dbReference>
<dbReference type="VEuPathDB" id="HostDB:ENSMUSG00000057181"/>
<dbReference type="eggNOG" id="ENOG502QRCR">
    <property type="taxonomic scope" value="Eukaryota"/>
</dbReference>
<dbReference type="GeneTree" id="ENSGT00390000005481"/>
<dbReference type="InParanoid" id="Q9CYI0"/>
<dbReference type="OMA" id="FEDAICP"/>
<dbReference type="OrthoDB" id="20238at2759"/>
<dbReference type="PhylomeDB" id="Q9CYI0"/>
<dbReference type="TreeFam" id="TF330763"/>
<dbReference type="BioGRID-ORCS" id="70591">
    <property type="hits" value="2 hits in 76 CRISPR screens"/>
</dbReference>
<dbReference type="PRO" id="PR:Q9CYI0"/>
<dbReference type="Proteomes" id="UP000000589">
    <property type="component" value="Chromosome 11"/>
</dbReference>
<dbReference type="RNAct" id="Q9CYI0">
    <property type="molecule type" value="protein"/>
</dbReference>
<dbReference type="Bgee" id="ENSMUSG00000057181">
    <property type="expression patterns" value="Expressed in hindlimb stylopod muscle and 221 other cell types or tissues"/>
</dbReference>
<dbReference type="ExpressionAtlas" id="Q9CYI0">
    <property type="expression patterns" value="baseline and differential"/>
</dbReference>
<dbReference type="GO" id="GO:0031410">
    <property type="term" value="C:cytoplasmic vesicle"/>
    <property type="evidence" value="ECO:0007669"/>
    <property type="project" value="Ensembl"/>
</dbReference>
<dbReference type="GO" id="GO:0005829">
    <property type="term" value="C:cytosol"/>
    <property type="evidence" value="ECO:0007669"/>
    <property type="project" value="Ensembl"/>
</dbReference>
<dbReference type="GO" id="GO:0005802">
    <property type="term" value="C:trans-Golgi network"/>
    <property type="evidence" value="ECO:0007669"/>
    <property type="project" value="Ensembl"/>
</dbReference>
<dbReference type="GO" id="GO:0006886">
    <property type="term" value="P:intracellular protein transport"/>
    <property type="evidence" value="ECO:0007669"/>
    <property type="project" value="Ensembl"/>
</dbReference>
<dbReference type="GO" id="GO:0099041">
    <property type="term" value="P:vesicle tethering to Golgi"/>
    <property type="evidence" value="ECO:0007669"/>
    <property type="project" value="Ensembl"/>
</dbReference>
<dbReference type="InterPro" id="IPR028280">
    <property type="entry name" value="Njmu-R1"/>
</dbReference>
<dbReference type="PANTHER" id="PTHR14416">
    <property type="entry name" value="PROTEIN NJMU-R1"/>
    <property type="match status" value="1"/>
</dbReference>
<dbReference type="PANTHER" id="PTHR14416:SF2">
    <property type="entry name" value="PROTEIN NJMU-R1"/>
    <property type="match status" value="1"/>
</dbReference>
<dbReference type="Pfam" id="PF15053">
    <property type="entry name" value="Njmu-R1"/>
    <property type="match status" value="1"/>
</dbReference>
<evidence type="ECO:0000250" key="1"/>
<evidence type="ECO:0000250" key="2">
    <source>
        <dbReference type="UniProtKB" id="Q9HAS0"/>
    </source>
</evidence>
<evidence type="ECO:0000256" key="3">
    <source>
        <dbReference type="SAM" id="MobiDB-lite"/>
    </source>
</evidence>
<evidence type="ECO:0000269" key="4">
    <source>
    </source>
</evidence>
<keyword id="KW-0597">Phosphoprotein</keyword>
<keyword id="KW-1185">Reference proteome</keyword>
<comment type="function">
    <text evidence="1">May have a role in spermatogenesis.</text>
</comment>
<comment type="subunit">
    <text evidence="4">Interacts with TBC1D23; this interaction may be indirect.</text>
</comment>
<protein>
    <recommendedName>
        <fullName>Protein Njmu-R1</fullName>
    </recommendedName>
</protein>
<accession>Q9CYI0</accession>
<accession>Q7TMQ9</accession>
<organism>
    <name type="scientific">Mus musculus</name>
    <name type="common">Mouse</name>
    <dbReference type="NCBI Taxonomy" id="10090"/>
    <lineage>
        <taxon>Eukaryota</taxon>
        <taxon>Metazoa</taxon>
        <taxon>Chordata</taxon>
        <taxon>Craniata</taxon>
        <taxon>Vertebrata</taxon>
        <taxon>Euteleostomi</taxon>
        <taxon>Mammalia</taxon>
        <taxon>Eutheria</taxon>
        <taxon>Euarchontoglires</taxon>
        <taxon>Glires</taxon>
        <taxon>Rodentia</taxon>
        <taxon>Myomorpha</taxon>
        <taxon>Muroidea</taxon>
        <taxon>Muridae</taxon>
        <taxon>Murinae</taxon>
        <taxon>Mus</taxon>
        <taxon>Mus</taxon>
    </lineage>
</organism>
<proteinExistence type="evidence at protein level"/>
<sequence length="393" mass="44422">MLPSLQESLDGDEKELESSEEGGSAEERRLEPPPSSHYCLYSFRGSRLTQNRGDSDDGRSGGINAETPSGDDFSLSLVDTNLPSEVEPELRSFIAKRLSKGAVFEGLGNVASVELRIPGYRVGCYYCLFQQEKLLPEIAAMESEHNPSEYVVCFLGGSEKGLELFRLELDKYIQGLKNNMNCEERSLGNDVKSYLNSWYEDVVCPIQRVVLLFQEKLTFLLHAALSYTPVEFKESDEKTKRDINRFLSVASLQGLIHEGTMTSLCMAMTEEQHKSVIIDCSGPQPQFHNAGSNRFCEDWMQAFLHGAEAGNPFLFRQVLENFKLKAIQDTNNLKRFIRQAEMNHYALFKCYMFLKNCGSGDILLKIVKVEHEEMPEAKSVVAVLEEFMREALV</sequence>
<reference key="1">
    <citation type="journal article" date="2005" name="Science">
        <title>The transcriptional landscape of the mammalian genome.</title>
        <authorList>
            <person name="Carninci P."/>
            <person name="Kasukawa T."/>
            <person name="Katayama S."/>
            <person name="Gough J."/>
            <person name="Frith M.C."/>
            <person name="Maeda N."/>
            <person name="Oyama R."/>
            <person name="Ravasi T."/>
            <person name="Lenhard B."/>
            <person name="Wells C."/>
            <person name="Kodzius R."/>
            <person name="Shimokawa K."/>
            <person name="Bajic V.B."/>
            <person name="Brenner S.E."/>
            <person name="Batalov S."/>
            <person name="Forrest A.R."/>
            <person name="Zavolan M."/>
            <person name="Davis M.J."/>
            <person name="Wilming L.G."/>
            <person name="Aidinis V."/>
            <person name="Allen J.E."/>
            <person name="Ambesi-Impiombato A."/>
            <person name="Apweiler R."/>
            <person name="Aturaliya R.N."/>
            <person name="Bailey T.L."/>
            <person name="Bansal M."/>
            <person name="Baxter L."/>
            <person name="Beisel K.W."/>
            <person name="Bersano T."/>
            <person name="Bono H."/>
            <person name="Chalk A.M."/>
            <person name="Chiu K.P."/>
            <person name="Choudhary V."/>
            <person name="Christoffels A."/>
            <person name="Clutterbuck D.R."/>
            <person name="Crowe M.L."/>
            <person name="Dalla E."/>
            <person name="Dalrymple B.P."/>
            <person name="de Bono B."/>
            <person name="Della Gatta G."/>
            <person name="di Bernardo D."/>
            <person name="Down T."/>
            <person name="Engstrom P."/>
            <person name="Fagiolini M."/>
            <person name="Faulkner G."/>
            <person name="Fletcher C.F."/>
            <person name="Fukushima T."/>
            <person name="Furuno M."/>
            <person name="Futaki S."/>
            <person name="Gariboldi M."/>
            <person name="Georgii-Hemming P."/>
            <person name="Gingeras T.R."/>
            <person name="Gojobori T."/>
            <person name="Green R.E."/>
            <person name="Gustincich S."/>
            <person name="Harbers M."/>
            <person name="Hayashi Y."/>
            <person name="Hensch T.K."/>
            <person name="Hirokawa N."/>
            <person name="Hill D."/>
            <person name="Huminiecki L."/>
            <person name="Iacono M."/>
            <person name="Ikeo K."/>
            <person name="Iwama A."/>
            <person name="Ishikawa T."/>
            <person name="Jakt M."/>
            <person name="Kanapin A."/>
            <person name="Katoh M."/>
            <person name="Kawasawa Y."/>
            <person name="Kelso J."/>
            <person name="Kitamura H."/>
            <person name="Kitano H."/>
            <person name="Kollias G."/>
            <person name="Krishnan S.P."/>
            <person name="Kruger A."/>
            <person name="Kummerfeld S.K."/>
            <person name="Kurochkin I.V."/>
            <person name="Lareau L.F."/>
            <person name="Lazarevic D."/>
            <person name="Lipovich L."/>
            <person name="Liu J."/>
            <person name="Liuni S."/>
            <person name="McWilliam S."/>
            <person name="Madan Babu M."/>
            <person name="Madera M."/>
            <person name="Marchionni L."/>
            <person name="Matsuda H."/>
            <person name="Matsuzawa S."/>
            <person name="Miki H."/>
            <person name="Mignone F."/>
            <person name="Miyake S."/>
            <person name="Morris K."/>
            <person name="Mottagui-Tabar S."/>
            <person name="Mulder N."/>
            <person name="Nakano N."/>
            <person name="Nakauchi H."/>
            <person name="Ng P."/>
            <person name="Nilsson R."/>
            <person name="Nishiguchi S."/>
            <person name="Nishikawa S."/>
            <person name="Nori F."/>
            <person name="Ohara O."/>
            <person name="Okazaki Y."/>
            <person name="Orlando V."/>
            <person name="Pang K.C."/>
            <person name="Pavan W.J."/>
            <person name="Pavesi G."/>
            <person name="Pesole G."/>
            <person name="Petrovsky N."/>
            <person name="Piazza S."/>
            <person name="Reed J."/>
            <person name="Reid J.F."/>
            <person name="Ring B.Z."/>
            <person name="Ringwald M."/>
            <person name="Rost B."/>
            <person name="Ruan Y."/>
            <person name="Salzberg S.L."/>
            <person name="Sandelin A."/>
            <person name="Schneider C."/>
            <person name="Schoenbach C."/>
            <person name="Sekiguchi K."/>
            <person name="Semple C.A."/>
            <person name="Seno S."/>
            <person name="Sessa L."/>
            <person name="Sheng Y."/>
            <person name="Shibata Y."/>
            <person name="Shimada H."/>
            <person name="Shimada K."/>
            <person name="Silva D."/>
            <person name="Sinclair B."/>
            <person name="Sperling S."/>
            <person name="Stupka E."/>
            <person name="Sugiura K."/>
            <person name="Sultana R."/>
            <person name="Takenaka Y."/>
            <person name="Taki K."/>
            <person name="Tammoja K."/>
            <person name="Tan S.L."/>
            <person name="Tang S."/>
            <person name="Taylor M.S."/>
            <person name="Tegner J."/>
            <person name="Teichmann S.A."/>
            <person name="Ueda H.R."/>
            <person name="van Nimwegen E."/>
            <person name="Verardo R."/>
            <person name="Wei C.L."/>
            <person name="Yagi K."/>
            <person name="Yamanishi H."/>
            <person name="Zabarovsky E."/>
            <person name="Zhu S."/>
            <person name="Zimmer A."/>
            <person name="Hide W."/>
            <person name="Bult C."/>
            <person name="Grimmond S.M."/>
            <person name="Teasdale R.D."/>
            <person name="Liu E.T."/>
            <person name="Brusic V."/>
            <person name="Quackenbush J."/>
            <person name="Wahlestedt C."/>
            <person name="Mattick J.S."/>
            <person name="Hume D.A."/>
            <person name="Kai C."/>
            <person name="Sasaki D."/>
            <person name="Tomaru Y."/>
            <person name="Fukuda S."/>
            <person name="Kanamori-Katayama M."/>
            <person name="Suzuki M."/>
            <person name="Aoki J."/>
            <person name="Arakawa T."/>
            <person name="Iida J."/>
            <person name="Imamura K."/>
            <person name="Itoh M."/>
            <person name="Kato T."/>
            <person name="Kawaji H."/>
            <person name="Kawagashira N."/>
            <person name="Kawashima T."/>
            <person name="Kojima M."/>
            <person name="Kondo S."/>
            <person name="Konno H."/>
            <person name="Nakano K."/>
            <person name="Ninomiya N."/>
            <person name="Nishio T."/>
            <person name="Okada M."/>
            <person name="Plessy C."/>
            <person name="Shibata K."/>
            <person name="Shiraki T."/>
            <person name="Suzuki S."/>
            <person name="Tagami M."/>
            <person name="Waki K."/>
            <person name="Watahiki A."/>
            <person name="Okamura-Oho Y."/>
            <person name="Suzuki H."/>
            <person name="Kawai J."/>
            <person name="Hayashizaki Y."/>
        </authorList>
    </citation>
    <scope>NUCLEOTIDE SEQUENCE [LARGE SCALE MRNA]</scope>
    <source>
        <strain>C57BL/6J</strain>
        <tissue>Bone marrow</tissue>
        <tissue>Muellerian duct</tissue>
    </source>
</reference>
<reference key="2">
    <citation type="journal article" date="2009" name="PLoS Biol.">
        <title>Lineage-specific biology revealed by a finished genome assembly of the mouse.</title>
        <authorList>
            <person name="Church D.M."/>
            <person name="Goodstadt L."/>
            <person name="Hillier L.W."/>
            <person name="Zody M.C."/>
            <person name="Goldstein S."/>
            <person name="She X."/>
            <person name="Bult C.J."/>
            <person name="Agarwala R."/>
            <person name="Cherry J.L."/>
            <person name="DiCuccio M."/>
            <person name="Hlavina W."/>
            <person name="Kapustin Y."/>
            <person name="Meric P."/>
            <person name="Maglott D."/>
            <person name="Birtle Z."/>
            <person name="Marques A.C."/>
            <person name="Graves T."/>
            <person name="Zhou S."/>
            <person name="Teague B."/>
            <person name="Potamousis K."/>
            <person name="Churas C."/>
            <person name="Place M."/>
            <person name="Herschleb J."/>
            <person name="Runnheim R."/>
            <person name="Forrest D."/>
            <person name="Amos-Landgraf J."/>
            <person name="Schwartz D.C."/>
            <person name="Cheng Z."/>
            <person name="Lindblad-Toh K."/>
            <person name="Eichler E.E."/>
            <person name="Ponting C.P."/>
        </authorList>
    </citation>
    <scope>NUCLEOTIDE SEQUENCE [LARGE SCALE GENOMIC DNA]</scope>
    <source>
        <strain>C57BL/6J</strain>
    </source>
</reference>
<reference key="3">
    <citation type="journal article" date="2004" name="Genome Res.">
        <title>The status, quality, and expansion of the NIH full-length cDNA project: the Mammalian Gene Collection (MGC).</title>
        <authorList>
            <consortium name="The MGC Project Team"/>
        </authorList>
    </citation>
    <scope>NUCLEOTIDE SEQUENCE [LARGE SCALE MRNA]</scope>
    <source>
        <strain>FVB/N</strain>
        <tissue>Mammary tumor</tissue>
    </source>
</reference>
<reference key="4">
    <citation type="journal article" date="2010" name="Cell">
        <title>A tissue-specific atlas of mouse protein phosphorylation and expression.</title>
        <authorList>
            <person name="Huttlin E.L."/>
            <person name="Jedrychowski M.P."/>
            <person name="Elias J.E."/>
            <person name="Goswami T."/>
            <person name="Rad R."/>
            <person name="Beausoleil S.A."/>
            <person name="Villen J."/>
            <person name="Haas W."/>
            <person name="Sowa M.E."/>
            <person name="Gygi S.P."/>
        </authorList>
    </citation>
    <scope>IDENTIFICATION BY MASS SPECTROMETRY [LARGE SCALE ANALYSIS]</scope>
    <source>
        <tissue>Brain</tissue>
        <tissue>Brown adipose tissue</tissue>
        <tissue>Kidney</tissue>
        <tissue>Lung</tissue>
        <tissue>Pancreas</tissue>
        <tissue>Spleen</tissue>
        <tissue>Testis</tissue>
    </source>
</reference>
<reference key="5">
    <citation type="journal article" date="2017" name="Nat. Cell Biol.">
        <title>TBC1D23 is a bridging factor for endosomal vesicle capture by golgins at the trans-Golgi.</title>
        <authorList>
            <person name="Shin J.J.H."/>
            <person name="Gillingham A.K."/>
            <person name="Begum F."/>
            <person name="Chadwick J."/>
            <person name="Munro S."/>
        </authorList>
    </citation>
    <scope>INTERACTION WITH TBC1D23</scope>
</reference>
<name>NJMU_MOUSE</name>
<feature type="chain" id="PRO_0000096866" description="Protein Njmu-R1">
    <location>
        <begin position="1"/>
        <end position="393"/>
    </location>
</feature>
<feature type="region of interest" description="Disordered" evidence="3">
    <location>
        <begin position="1"/>
        <end position="74"/>
    </location>
</feature>
<feature type="compositionally biased region" description="Acidic residues" evidence="3">
    <location>
        <begin position="9"/>
        <end position="24"/>
    </location>
</feature>
<feature type="modified residue" description="Phosphoserine" evidence="2">
    <location>
        <position position="8"/>
    </location>
</feature>
<feature type="modified residue" description="Phosphoserine" evidence="2">
    <location>
        <position position="18"/>
    </location>
</feature>